<sequence>MSTHVTFDYSKALSFIGEHEITYLRDAVKVTHHAIHEKTGAGNDFLGWVDLPLQYDKEEFARIQKCAEKIKNDSDILLVVGIGGSYLGARAAIEMLNHSFYNTLSKEQRKTPQVLFVGQNISSTYMKDLMDVLEGKDFSINVISKSGTTTEPALAFRIFRKLLEEKYGKEEARKRIYATTDKARGALKTLADNEGYETFVIPDDVGGRFSVLTPVGLLPIAVSGLNIEEMMKGAAAGRDDFGTSELEENPAYQYAVVRNALYNKGKTIEMLVNYEPALQYFAEWWKQLFGESEGKDQKGIFPSSANFSTDLHSLGQYVQEGRRDLFETVLKVGKSTHELTIESEENDLDGLNYLAGETVDFVNTKAYEGTLLAHSDGGVPNLIVNIPELNEYTFGYLVYFFEKACAMSGYLLGVNPFDQPGVEAYKKNMFALLGKPGFEELKAELEERLK</sequence>
<feature type="chain" id="PRO_1000013940" description="Glucose-6-phosphate isomerase">
    <location>
        <begin position="1"/>
        <end position="450"/>
    </location>
</feature>
<feature type="active site" description="Proton donor" evidence="1">
    <location>
        <position position="291"/>
    </location>
</feature>
<feature type="active site" evidence="1">
    <location>
        <position position="312"/>
    </location>
</feature>
<feature type="active site" evidence="1">
    <location>
        <position position="426"/>
    </location>
</feature>
<feature type="modified residue" description="Phosphothreonine" evidence="1">
    <location>
        <position position="39"/>
    </location>
</feature>
<comment type="function">
    <text evidence="1">Catalyzes the reversible isomerization of glucose-6-phosphate to fructose-6-phosphate.</text>
</comment>
<comment type="catalytic activity">
    <reaction evidence="1">
        <text>alpha-D-glucose 6-phosphate = beta-D-fructose 6-phosphate</text>
        <dbReference type="Rhea" id="RHEA:11816"/>
        <dbReference type="ChEBI" id="CHEBI:57634"/>
        <dbReference type="ChEBI" id="CHEBI:58225"/>
        <dbReference type="EC" id="5.3.1.9"/>
    </reaction>
</comment>
<comment type="pathway">
    <text evidence="1">Carbohydrate biosynthesis; gluconeogenesis.</text>
</comment>
<comment type="pathway">
    <text evidence="1">Carbohydrate degradation; glycolysis; D-glyceraldehyde 3-phosphate and glycerone phosphate from D-glucose: step 2/4.</text>
</comment>
<comment type="subcellular location">
    <subcellularLocation>
        <location evidence="1">Cytoplasm</location>
    </subcellularLocation>
</comment>
<comment type="similarity">
    <text evidence="1">Belongs to the GPI family.</text>
</comment>
<protein>
    <recommendedName>
        <fullName evidence="1">Glucose-6-phosphate isomerase</fullName>
        <shortName evidence="1">GPI</shortName>
        <ecNumber evidence="1">5.3.1.9</ecNumber>
    </recommendedName>
    <alternativeName>
        <fullName evidence="1">Phosphoglucose isomerase</fullName>
        <shortName evidence="1">PGI</shortName>
    </alternativeName>
    <alternativeName>
        <fullName evidence="1">Phosphohexose isomerase</fullName>
        <shortName evidence="1">PHI</shortName>
    </alternativeName>
</protein>
<accession>A0RK94</accession>
<reference key="1">
    <citation type="journal article" date="2007" name="J. Bacteriol.">
        <title>The complete genome sequence of Bacillus thuringiensis Al Hakam.</title>
        <authorList>
            <person name="Challacombe J.F."/>
            <person name="Altherr M.R."/>
            <person name="Xie G."/>
            <person name="Bhotika S.S."/>
            <person name="Brown N."/>
            <person name="Bruce D."/>
            <person name="Campbell C.S."/>
            <person name="Campbell M.L."/>
            <person name="Chen J."/>
            <person name="Chertkov O."/>
            <person name="Cleland C."/>
            <person name="Dimitrijevic M."/>
            <person name="Doggett N.A."/>
            <person name="Fawcett J.J."/>
            <person name="Glavina T."/>
            <person name="Goodwin L.A."/>
            <person name="Green L.D."/>
            <person name="Han C.S."/>
            <person name="Hill K.K."/>
            <person name="Hitchcock P."/>
            <person name="Jackson P.J."/>
            <person name="Keim P."/>
            <person name="Kewalramani A.R."/>
            <person name="Longmire J."/>
            <person name="Lucas S."/>
            <person name="Malfatti S."/>
            <person name="Martinez D."/>
            <person name="McMurry K."/>
            <person name="Meincke L.J."/>
            <person name="Misra M."/>
            <person name="Moseman B.L."/>
            <person name="Mundt M."/>
            <person name="Munk A.C."/>
            <person name="Okinaka R.T."/>
            <person name="Parson-Quintana B."/>
            <person name="Reilly L.P."/>
            <person name="Richardson P."/>
            <person name="Robinson D.L."/>
            <person name="Saunders E."/>
            <person name="Tapia R."/>
            <person name="Tesmer J.G."/>
            <person name="Thayer N."/>
            <person name="Thompson L.S."/>
            <person name="Tice H."/>
            <person name="Ticknor L.O."/>
            <person name="Wills P.L."/>
            <person name="Gilna P."/>
            <person name="Brettin T.S."/>
        </authorList>
    </citation>
    <scope>NUCLEOTIDE SEQUENCE [LARGE SCALE GENOMIC DNA]</scope>
    <source>
        <strain>Al Hakam</strain>
    </source>
</reference>
<name>G6PI_BACAH</name>
<keyword id="KW-0963">Cytoplasm</keyword>
<keyword id="KW-0312">Gluconeogenesis</keyword>
<keyword id="KW-0324">Glycolysis</keyword>
<keyword id="KW-0413">Isomerase</keyword>
<keyword id="KW-0597">Phosphoprotein</keyword>
<organism>
    <name type="scientific">Bacillus thuringiensis (strain Al Hakam)</name>
    <dbReference type="NCBI Taxonomy" id="412694"/>
    <lineage>
        <taxon>Bacteria</taxon>
        <taxon>Bacillati</taxon>
        <taxon>Bacillota</taxon>
        <taxon>Bacilli</taxon>
        <taxon>Bacillales</taxon>
        <taxon>Bacillaceae</taxon>
        <taxon>Bacillus</taxon>
        <taxon>Bacillus cereus group</taxon>
    </lineage>
</organism>
<dbReference type="EC" id="5.3.1.9" evidence="1"/>
<dbReference type="EMBL" id="CP000485">
    <property type="protein sequence ID" value="ABK87637.1"/>
    <property type="molecule type" value="Genomic_DNA"/>
</dbReference>
<dbReference type="RefSeq" id="WP_000103658.1">
    <property type="nucleotide sequence ID" value="NC_008600.1"/>
</dbReference>
<dbReference type="SMR" id="A0RK94"/>
<dbReference type="KEGG" id="btl:BALH_4440"/>
<dbReference type="HOGENOM" id="CLU_037303_0_1_9"/>
<dbReference type="UniPathway" id="UPA00109">
    <property type="reaction ID" value="UER00181"/>
</dbReference>
<dbReference type="UniPathway" id="UPA00138"/>
<dbReference type="GO" id="GO:0005829">
    <property type="term" value="C:cytosol"/>
    <property type="evidence" value="ECO:0007669"/>
    <property type="project" value="TreeGrafter"/>
</dbReference>
<dbReference type="GO" id="GO:0097367">
    <property type="term" value="F:carbohydrate derivative binding"/>
    <property type="evidence" value="ECO:0007669"/>
    <property type="project" value="InterPro"/>
</dbReference>
<dbReference type="GO" id="GO:0004347">
    <property type="term" value="F:glucose-6-phosphate isomerase activity"/>
    <property type="evidence" value="ECO:0007669"/>
    <property type="project" value="UniProtKB-UniRule"/>
</dbReference>
<dbReference type="GO" id="GO:0048029">
    <property type="term" value="F:monosaccharide binding"/>
    <property type="evidence" value="ECO:0007669"/>
    <property type="project" value="TreeGrafter"/>
</dbReference>
<dbReference type="GO" id="GO:0006094">
    <property type="term" value="P:gluconeogenesis"/>
    <property type="evidence" value="ECO:0007669"/>
    <property type="project" value="UniProtKB-UniRule"/>
</dbReference>
<dbReference type="GO" id="GO:0051156">
    <property type="term" value="P:glucose 6-phosphate metabolic process"/>
    <property type="evidence" value="ECO:0007669"/>
    <property type="project" value="TreeGrafter"/>
</dbReference>
<dbReference type="GO" id="GO:0006096">
    <property type="term" value="P:glycolytic process"/>
    <property type="evidence" value="ECO:0007669"/>
    <property type="project" value="UniProtKB-UniRule"/>
</dbReference>
<dbReference type="CDD" id="cd05015">
    <property type="entry name" value="SIS_PGI_1"/>
    <property type="match status" value="1"/>
</dbReference>
<dbReference type="CDD" id="cd05016">
    <property type="entry name" value="SIS_PGI_2"/>
    <property type="match status" value="1"/>
</dbReference>
<dbReference type="FunFam" id="3.40.50.10490:FF:000015">
    <property type="entry name" value="Glucose-6-phosphate isomerase"/>
    <property type="match status" value="1"/>
</dbReference>
<dbReference type="FunFam" id="3.40.50.10490:FF:000016">
    <property type="entry name" value="Glucose-6-phosphate isomerase"/>
    <property type="match status" value="1"/>
</dbReference>
<dbReference type="FunFam" id="3.40.50.10490:FF:000020">
    <property type="entry name" value="Glucose-6-phosphate isomerase"/>
    <property type="match status" value="1"/>
</dbReference>
<dbReference type="Gene3D" id="3.40.50.10490">
    <property type="entry name" value="Glucose-6-phosphate isomerase like protein, domain 1"/>
    <property type="match status" value="3"/>
</dbReference>
<dbReference type="HAMAP" id="MF_00473">
    <property type="entry name" value="G6P_isomerase"/>
    <property type="match status" value="1"/>
</dbReference>
<dbReference type="InterPro" id="IPR001672">
    <property type="entry name" value="G6P_Isomerase"/>
</dbReference>
<dbReference type="InterPro" id="IPR018189">
    <property type="entry name" value="Phosphoglucose_isomerase_CS"/>
</dbReference>
<dbReference type="InterPro" id="IPR046348">
    <property type="entry name" value="SIS_dom_sf"/>
</dbReference>
<dbReference type="InterPro" id="IPR035476">
    <property type="entry name" value="SIS_PGI_1"/>
</dbReference>
<dbReference type="InterPro" id="IPR035482">
    <property type="entry name" value="SIS_PGI_2"/>
</dbReference>
<dbReference type="NCBIfam" id="NF010697">
    <property type="entry name" value="PRK14097.1"/>
    <property type="match status" value="1"/>
</dbReference>
<dbReference type="PANTHER" id="PTHR11469">
    <property type="entry name" value="GLUCOSE-6-PHOSPHATE ISOMERASE"/>
    <property type="match status" value="1"/>
</dbReference>
<dbReference type="PANTHER" id="PTHR11469:SF1">
    <property type="entry name" value="GLUCOSE-6-PHOSPHATE ISOMERASE"/>
    <property type="match status" value="1"/>
</dbReference>
<dbReference type="Pfam" id="PF00342">
    <property type="entry name" value="PGI"/>
    <property type="match status" value="1"/>
</dbReference>
<dbReference type="PRINTS" id="PR00662">
    <property type="entry name" value="G6PISOMERASE"/>
</dbReference>
<dbReference type="SUPFAM" id="SSF53697">
    <property type="entry name" value="SIS domain"/>
    <property type="match status" value="1"/>
</dbReference>
<dbReference type="PROSITE" id="PS00765">
    <property type="entry name" value="P_GLUCOSE_ISOMERASE_1"/>
    <property type="match status" value="1"/>
</dbReference>
<dbReference type="PROSITE" id="PS00174">
    <property type="entry name" value="P_GLUCOSE_ISOMERASE_2"/>
    <property type="match status" value="1"/>
</dbReference>
<dbReference type="PROSITE" id="PS51463">
    <property type="entry name" value="P_GLUCOSE_ISOMERASE_3"/>
    <property type="match status" value="1"/>
</dbReference>
<gene>
    <name evidence="1" type="primary">pgi</name>
    <name type="ordered locus">BALH_4440</name>
</gene>
<evidence type="ECO:0000255" key="1">
    <source>
        <dbReference type="HAMAP-Rule" id="MF_00473"/>
    </source>
</evidence>
<proteinExistence type="inferred from homology"/>